<keyword id="KW-0963">Cytoplasm</keyword>
<keyword id="KW-0443">Lipid metabolism</keyword>
<keyword id="KW-0597">Phosphoprotein</keyword>
<keyword id="KW-1185">Reference proteome</keyword>
<keyword id="KW-0808">Transferase</keyword>
<accession>Q5R8E8</accession>
<gene>
    <name type="primary">GSTM2</name>
</gene>
<sequence>MPIILGYWNIRGLAHSIRLLLEYTDSSYEEKKYMMGDAPDYDRSQWLNEKFKLGLDFPNLPYLIDGTHKITQSNAILRYIARKHNLCGETEKEKIQEDILENQLMDNRMQLARLCYNPDFEKLKPEYLEGLPEMLKLYSQFLGKQPWFLGDKITFVDFIAYDVLERNQVFEPSCLDAFPNLKDFISRFEGLEKISAYMKSSRFLPRPVFTKMAVWGNK</sequence>
<feature type="chain" id="PRO_0000185821" description="Glutathione S-transferase Mu 2">
    <location>
        <begin position="1"/>
        <end position="218"/>
    </location>
</feature>
<feature type="domain" description="GST N-terminal">
    <location>
        <begin position="2"/>
        <end position="88"/>
    </location>
</feature>
<feature type="domain" description="GST C-terminal">
    <location>
        <begin position="90"/>
        <end position="208"/>
    </location>
</feature>
<feature type="binding site" evidence="2">
    <location>
        <begin position="7"/>
        <end position="8"/>
    </location>
    <ligand>
        <name>glutathione</name>
        <dbReference type="ChEBI" id="CHEBI:57925"/>
    </ligand>
</feature>
<feature type="binding site" evidence="2">
    <location>
        <begin position="43"/>
        <end position="46"/>
    </location>
    <ligand>
        <name>glutathione</name>
        <dbReference type="ChEBI" id="CHEBI:57925"/>
    </ligand>
</feature>
<feature type="binding site" evidence="2">
    <location>
        <position position="50"/>
    </location>
    <ligand>
        <name>glutathione</name>
        <dbReference type="ChEBI" id="CHEBI:57925"/>
    </ligand>
</feature>
<feature type="binding site" evidence="2">
    <location>
        <begin position="59"/>
        <end position="60"/>
    </location>
    <ligand>
        <name>glutathione</name>
        <dbReference type="ChEBI" id="CHEBI:57925"/>
    </ligand>
</feature>
<feature type="binding site" evidence="2">
    <location>
        <begin position="72"/>
        <end position="73"/>
    </location>
    <ligand>
        <name>glutathione</name>
        <dbReference type="ChEBI" id="CHEBI:57925"/>
    </ligand>
</feature>
<feature type="binding site" evidence="1">
    <location>
        <position position="116"/>
    </location>
    <ligand>
        <name>substrate</name>
    </ligand>
</feature>
<feature type="site" description="Important for substrate specificity" evidence="1">
    <location>
        <position position="210"/>
    </location>
</feature>
<feature type="modified residue" description="Phosphoserine" evidence="2">
    <location>
        <position position="27"/>
    </location>
</feature>
<feature type="modified residue" description="Phosphoserine" evidence="2">
    <location>
        <position position="44"/>
    </location>
</feature>
<reference key="1">
    <citation type="submission" date="2004-11" db="EMBL/GenBank/DDBJ databases">
        <authorList>
            <consortium name="The German cDNA consortium"/>
        </authorList>
    </citation>
    <scope>NUCLEOTIDE SEQUENCE [LARGE SCALE MRNA]</scope>
    <source>
        <tissue>Heart</tissue>
    </source>
</reference>
<protein>
    <recommendedName>
        <fullName evidence="4">Glutathione S-transferase Mu 2</fullName>
        <ecNumber evidence="3">2.5.1.18</ecNumber>
    </recommendedName>
    <alternativeName>
        <fullName>GST class-mu 2</fullName>
    </alternativeName>
    <alternativeName>
        <fullName>GSTM2-2</fullName>
    </alternativeName>
</protein>
<dbReference type="EC" id="2.5.1.18" evidence="3"/>
<dbReference type="EMBL" id="CR859804">
    <property type="protein sequence ID" value="CAH91962.1"/>
    <property type="molecule type" value="mRNA"/>
</dbReference>
<dbReference type="RefSeq" id="NP_001127487.1">
    <property type="nucleotide sequence ID" value="NM_001134015.1"/>
</dbReference>
<dbReference type="SMR" id="Q5R8E8"/>
<dbReference type="FunCoup" id="Q5R8E8">
    <property type="interactions" value="171"/>
</dbReference>
<dbReference type="STRING" id="9601.ENSPPYP00000001234"/>
<dbReference type="GeneID" id="100174562"/>
<dbReference type="KEGG" id="pon:100174562"/>
<dbReference type="CTD" id="2946"/>
<dbReference type="eggNOG" id="KOG1695">
    <property type="taxonomic scope" value="Eukaryota"/>
</dbReference>
<dbReference type="InParanoid" id="Q5R8E8"/>
<dbReference type="OrthoDB" id="4951845at2759"/>
<dbReference type="Proteomes" id="UP000001595">
    <property type="component" value="Unplaced"/>
</dbReference>
<dbReference type="GO" id="GO:0005737">
    <property type="term" value="C:cytoplasm"/>
    <property type="evidence" value="ECO:0007669"/>
    <property type="project" value="UniProtKB-SubCell"/>
</dbReference>
<dbReference type="GO" id="GO:0045171">
    <property type="term" value="C:intercellular bridge"/>
    <property type="evidence" value="ECO:0007669"/>
    <property type="project" value="UniProtKB-ARBA"/>
</dbReference>
<dbReference type="GO" id="GO:0004364">
    <property type="term" value="F:glutathione transferase activity"/>
    <property type="evidence" value="ECO:0000250"/>
    <property type="project" value="UniProtKB"/>
</dbReference>
<dbReference type="GO" id="GO:0042802">
    <property type="term" value="F:identical protein binding"/>
    <property type="evidence" value="ECO:0007669"/>
    <property type="project" value="UniProtKB-ARBA"/>
</dbReference>
<dbReference type="GO" id="GO:0006749">
    <property type="term" value="P:glutathione metabolic process"/>
    <property type="evidence" value="ECO:0000250"/>
    <property type="project" value="UniProtKB"/>
</dbReference>
<dbReference type="GO" id="GO:0051122">
    <property type="term" value="P:hepoxilin biosynthetic process"/>
    <property type="evidence" value="ECO:0000250"/>
    <property type="project" value="UniProtKB"/>
</dbReference>
<dbReference type="CDD" id="cd03209">
    <property type="entry name" value="GST_C_Mu"/>
    <property type="match status" value="1"/>
</dbReference>
<dbReference type="CDD" id="cd03075">
    <property type="entry name" value="GST_N_Mu"/>
    <property type="match status" value="1"/>
</dbReference>
<dbReference type="FunFam" id="1.20.1050.10:FF:000083">
    <property type="entry name" value="Glutathione S-transferase Mu 1"/>
    <property type="match status" value="1"/>
</dbReference>
<dbReference type="FunFam" id="3.40.30.10:FF:000603">
    <property type="entry name" value="Glutathione S-transferase Mu 1"/>
    <property type="match status" value="1"/>
</dbReference>
<dbReference type="Gene3D" id="1.20.1050.10">
    <property type="match status" value="1"/>
</dbReference>
<dbReference type="Gene3D" id="3.40.30.10">
    <property type="entry name" value="Glutaredoxin"/>
    <property type="match status" value="1"/>
</dbReference>
<dbReference type="InterPro" id="IPR010987">
    <property type="entry name" value="Glutathione-S-Trfase_C-like"/>
</dbReference>
<dbReference type="InterPro" id="IPR036282">
    <property type="entry name" value="Glutathione-S-Trfase_C_sf"/>
</dbReference>
<dbReference type="InterPro" id="IPR040079">
    <property type="entry name" value="Glutathione_S-Trfase"/>
</dbReference>
<dbReference type="InterPro" id="IPR004045">
    <property type="entry name" value="Glutathione_S-Trfase_N"/>
</dbReference>
<dbReference type="InterPro" id="IPR004046">
    <property type="entry name" value="GST_C"/>
</dbReference>
<dbReference type="InterPro" id="IPR003081">
    <property type="entry name" value="GST_mu"/>
</dbReference>
<dbReference type="InterPro" id="IPR050213">
    <property type="entry name" value="GST_superfamily"/>
</dbReference>
<dbReference type="InterPro" id="IPR036249">
    <property type="entry name" value="Thioredoxin-like_sf"/>
</dbReference>
<dbReference type="PANTHER" id="PTHR11571">
    <property type="entry name" value="GLUTATHIONE S-TRANSFERASE"/>
    <property type="match status" value="1"/>
</dbReference>
<dbReference type="PANTHER" id="PTHR11571:SF254">
    <property type="entry name" value="GLUTATHIONE S-TRANSFERASE MU 2"/>
    <property type="match status" value="1"/>
</dbReference>
<dbReference type="Pfam" id="PF00043">
    <property type="entry name" value="GST_C"/>
    <property type="match status" value="1"/>
</dbReference>
<dbReference type="Pfam" id="PF02798">
    <property type="entry name" value="GST_N"/>
    <property type="match status" value="1"/>
</dbReference>
<dbReference type="PRINTS" id="PR01267">
    <property type="entry name" value="GSTRNSFRASEM"/>
</dbReference>
<dbReference type="SFLD" id="SFLDG01205">
    <property type="entry name" value="AMPS.1"/>
    <property type="match status" value="1"/>
</dbReference>
<dbReference type="SFLD" id="SFLDS00019">
    <property type="entry name" value="Glutathione_Transferase_(cytos"/>
    <property type="match status" value="1"/>
</dbReference>
<dbReference type="SUPFAM" id="SSF47616">
    <property type="entry name" value="GST C-terminal domain-like"/>
    <property type="match status" value="1"/>
</dbReference>
<dbReference type="SUPFAM" id="SSF52833">
    <property type="entry name" value="Thioredoxin-like"/>
    <property type="match status" value="1"/>
</dbReference>
<dbReference type="PROSITE" id="PS50405">
    <property type="entry name" value="GST_CTER"/>
    <property type="match status" value="1"/>
</dbReference>
<dbReference type="PROSITE" id="PS50404">
    <property type="entry name" value="GST_NTER"/>
    <property type="match status" value="1"/>
</dbReference>
<comment type="function">
    <text evidence="3">Conjugation of reduced glutathione to a wide number of exogenous and endogenous hydrophobic electrophiles. Participates in the formation of novel hepoxilin regioisomers.</text>
</comment>
<comment type="catalytic activity">
    <reaction evidence="3">
        <text>RX + glutathione = an S-substituted glutathione + a halide anion + H(+)</text>
        <dbReference type="Rhea" id="RHEA:16437"/>
        <dbReference type="ChEBI" id="CHEBI:15378"/>
        <dbReference type="ChEBI" id="CHEBI:16042"/>
        <dbReference type="ChEBI" id="CHEBI:17792"/>
        <dbReference type="ChEBI" id="CHEBI:57925"/>
        <dbReference type="ChEBI" id="CHEBI:90779"/>
        <dbReference type="EC" id="2.5.1.18"/>
    </reaction>
    <physiologicalReaction direction="left-to-right" evidence="3">
        <dbReference type="Rhea" id="RHEA:16438"/>
    </physiologicalReaction>
</comment>
<comment type="catalytic activity">
    <reaction evidence="3">
        <text>11(S)-hydroxy-14(S),15(S)-epoxy-(5Z,8Z,12E)-eicosatrienoate + glutathione = (11S,15S)-dihydroxy-14(R)-S-glutathionyl-(5Z,8Z,12E)-eicosatrienoate</text>
        <dbReference type="Rhea" id="RHEA:50260"/>
        <dbReference type="ChEBI" id="CHEBI:57925"/>
        <dbReference type="ChEBI" id="CHEBI:132200"/>
        <dbReference type="ChEBI" id="CHEBI:132201"/>
    </reaction>
    <physiologicalReaction direction="left-to-right" evidence="3">
        <dbReference type="Rhea" id="RHEA:50261"/>
    </physiologicalReaction>
</comment>
<comment type="subunit">
    <text evidence="1">Homodimer.</text>
</comment>
<comment type="subcellular location">
    <subcellularLocation>
        <location evidence="1">Cytoplasm</location>
    </subcellularLocation>
</comment>
<comment type="similarity">
    <text evidence="4">Belongs to the GST superfamily. Mu family.</text>
</comment>
<name>GSTM2_PONAB</name>
<organism>
    <name type="scientific">Pongo abelii</name>
    <name type="common">Sumatran orangutan</name>
    <name type="synonym">Pongo pygmaeus abelii</name>
    <dbReference type="NCBI Taxonomy" id="9601"/>
    <lineage>
        <taxon>Eukaryota</taxon>
        <taxon>Metazoa</taxon>
        <taxon>Chordata</taxon>
        <taxon>Craniata</taxon>
        <taxon>Vertebrata</taxon>
        <taxon>Euteleostomi</taxon>
        <taxon>Mammalia</taxon>
        <taxon>Eutheria</taxon>
        <taxon>Euarchontoglires</taxon>
        <taxon>Primates</taxon>
        <taxon>Haplorrhini</taxon>
        <taxon>Catarrhini</taxon>
        <taxon>Hominidae</taxon>
        <taxon>Pongo</taxon>
    </lineage>
</organism>
<proteinExistence type="evidence at transcript level"/>
<evidence type="ECO:0000250" key="1"/>
<evidence type="ECO:0000250" key="2">
    <source>
        <dbReference type="UniProtKB" id="P08010"/>
    </source>
</evidence>
<evidence type="ECO:0000250" key="3">
    <source>
        <dbReference type="UniProtKB" id="P28161"/>
    </source>
</evidence>
<evidence type="ECO:0000305" key="4"/>